<sequence>MPLQGPQRRLLGSLNSTLPATPYLGLTTNQTEPPCLEVSIPDGLFLSLGLVSLVENVLVVTAIAKNRNLHSPMYYFICCLAVSDLLVSMSNVLEMAILLLLEAGVLATQASVLQQLDNIIDVLICGSMVSSLCFLGSIAVDRYISIFYALRYHSIMMLPRVWRAIVAIWVVSVLSSTLFIAYYNHTAVLLCLVTFFVAMLVLMAVLYVHMLARACQHARGIARLHKRQHPIHQGFGLKGAATLTILLGVFFLCWGPFFLHLSLLILCPQHPTCGCVFKNFKLFLTLILCSAIVDPLIYAFRSQELRKTLQEVLLCSW</sequence>
<comment type="function">
    <text evidence="1">Receptor for MSH (alpha, beta and gamma) and ACTH (By similarity). The activity of this receptor is mediated by G proteins which activate adenylate cyclase (By similarity). Mediates melanogenesis, the production of eumelanin (black/brown) and phaeomelanin (red/yellow), via regulation of cAMP signaling in melanocytes (By similarity).</text>
</comment>
<comment type="subunit">
    <text evidence="1">Interacts with MGRN1, but does not undergo MGRN1-mediated ubiquitination; this interaction competes with GNAS-binding and thus inhibits agonist-induced cAMP production. Interacts with OPN3; the interaction results in a decrease in MC1R-mediated cAMP signaling and ultimately a decrease in melanin production in melanocytes.</text>
</comment>
<comment type="subcellular location">
    <subcellularLocation>
        <location evidence="1">Cell membrane</location>
        <topology evidence="2">Multi-pass membrane protein</topology>
    </subcellularLocation>
</comment>
<comment type="similarity">
    <text evidence="3">Belongs to the G-protein coupled receptor 1 family.</text>
</comment>
<reference key="1">
    <citation type="journal article" date="2001" name="Mamm. Genome">
        <title>Mutations in the agouti (ASIP), the extension (MC1R), and the brown (TYRP1) loci and their association to coat color phenotypes in horses (Equus caballus).</title>
        <authorList>
            <person name="Rieder S."/>
            <person name="Taourit S."/>
            <person name="Mariat D."/>
            <person name="Langlois B."/>
            <person name="Guerin G."/>
        </authorList>
    </citation>
    <scope>NUCLEOTIDE SEQUENCE [GENOMIC DNA]</scope>
    <scope>VARIANT PHE-83</scope>
</reference>
<reference key="2">
    <citation type="journal article" date="1996" name="Mamm. Genome">
        <title>A missense mutation in the gene for melanocyte-stimulating hormone receptor (MC1R) is associated with the chestnut coat color in horses.</title>
        <authorList>
            <person name="Marklund L."/>
            <person name="Moller M.J."/>
            <person name="Sandberg K."/>
            <person name="Andersson L."/>
        </authorList>
    </citation>
    <scope>NUCLEOTIDE SEQUENCE [GENOMIC DNA] OF 17-308</scope>
    <scope>VARIANT PHE-83</scope>
</reference>
<gene>
    <name type="primary">MC1R</name>
</gene>
<feature type="chain" id="PRO_0000069817" description="Melanocyte-stimulating hormone receptor">
    <location>
        <begin position="1"/>
        <end position="317"/>
    </location>
</feature>
<feature type="topological domain" description="Extracellular" evidence="2">
    <location>
        <begin position="1"/>
        <end position="37"/>
    </location>
</feature>
<feature type="transmembrane region" description="Helical; Name=1" evidence="2">
    <location>
        <begin position="38"/>
        <end position="63"/>
    </location>
</feature>
<feature type="topological domain" description="Cytoplasmic" evidence="2">
    <location>
        <begin position="64"/>
        <end position="72"/>
    </location>
</feature>
<feature type="transmembrane region" description="Helical; Name=2" evidence="2">
    <location>
        <begin position="73"/>
        <end position="93"/>
    </location>
</feature>
<feature type="topological domain" description="Extracellular" evidence="2">
    <location>
        <begin position="94"/>
        <end position="118"/>
    </location>
</feature>
<feature type="transmembrane region" description="Helical; Name=3" evidence="2">
    <location>
        <begin position="119"/>
        <end position="140"/>
    </location>
</feature>
<feature type="topological domain" description="Cytoplasmic" evidence="2">
    <location>
        <begin position="141"/>
        <end position="163"/>
    </location>
</feature>
<feature type="transmembrane region" description="Helical; Name=4" evidence="2">
    <location>
        <begin position="164"/>
        <end position="183"/>
    </location>
</feature>
<feature type="topological domain" description="Extracellular" evidence="2">
    <location>
        <begin position="184"/>
        <end position="191"/>
    </location>
</feature>
<feature type="transmembrane region" description="Helical; Name=5" evidence="2">
    <location>
        <begin position="192"/>
        <end position="211"/>
    </location>
</feature>
<feature type="topological domain" description="Cytoplasmic" evidence="2">
    <location>
        <begin position="212"/>
        <end position="240"/>
    </location>
</feature>
<feature type="transmembrane region" description="Helical; Name=6" evidence="2">
    <location>
        <begin position="241"/>
        <end position="266"/>
    </location>
</feature>
<feature type="topological domain" description="Extracellular" evidence="2">
    <location>
        <begin position="267"/>
        <end position="279"/>
    </location>
</feature>
<feature type="transmembrane region" description="Helical; Name=7" evidence="2">
    <location>
        <begin position="280"/>
        <end position="300"/>
    </location>
</feature>
<feature type="topological domain" description="Cytoplasmic" evidence="2">
    <location>
        <begin position="301"/>
        <end position="317"/>
    </location>
</feature>
<feature type="lipid moiety-binding region" description="S-palmitoyl cysteine" evidence="2">
    <location>
        <position position="315"/>
    </location>
</feature>
<feature type="glycosylation site" description="N-linked (GlcNAc...) asparagine" evidence="2">
    <location>
        <position position="29"/>
    </location>
</feature>
<feature type="sequence variant" description="In chesnut color." evidence="4 5">
    <original>S</original>
    <variation>F</variation>
    <location>
        <position position="83"/>
    </location>
</feature>
<dbReference type="EMBL" id="AF288357">
    <property type="protein sequence ID" value="AAK70924.1"/>
    <property type="molecule type" value="Genomic_DNA"/>
</dbReference>
<dbReference type="EMBL" id="X98012">
    <property type="protein sequence ID" value="CAA66641.1"/>
    <property type="molecule type" value="Genomic_DNA"/>
</dbReference>
<dbReference type="RefSeq" id="NP_001108006.1">
    <property type="nucleotide sequence ID" value="NM_001114534.1"/>
</dbReference>
<dbReference type="SMR" id="P79166"/>
<dbReference type="FunCoup" id="P79166">
    <property type="interactions" value="180"/>
</dbReference>
<dbReference type="GlyCosmos" id="P79166">
    <property type="glycosylation" value="1 site, No reported glycans"/>
</dbReference>
<dbReference type="Ensembl" id="ENSECAT00000129995.1">
    <property type="protein sequence ID" value="ENSECAP00000088247.1"/>
    <property type="gene ID" value="ENSECAG00000047972.1"/>
</dbReference>
<dbReference type="GeneID" id="100136907"/>
<dbReference type="KEGG" id="ecb:100136907"/>
<dbReference type="CTD" id="4157"/>
<dbReference type="GeneTree" id="ENSGT01120000271819"/>
<dbReference type="HOGENOM" id="CLU_009579_13_0_1"/>
<dbReference type="InParanoid" id="P79166"/>
<dbReference type="OrthoDB" id="5970330at2759"/>
<dbReference type="TreeFam" id="TF332646"/>
<dbReference type="Proteomes" id="UP000002281">
    <property type="component" value="Chromosome 3"/>
</dbReference>
<dbReference type="GO" id="GO:0005737">
    <property type="term" value="C:cytoplasm"/>
    <property type="evidence" value="ECO:0000318"/>
    <property type="project" value="GO_Central"/>
</dbReference>
<dbReference type="GO" id="GO:0005886">
    <property type="term" value="C:plasma membrane"/>
    <property type="evidence" value="ECO:0000250"/>
    <property type="project" value="UniProtKB"/>
</dbReference>
<dbReference type="GO" id="GO:0004980">
    <property type="term" value="F:melanocyte-stimulating hormone receptor activity"/>
    <property type="evidence" value="ECO:0000318"/>
    <property type="project" value="GO_Central"/>
</dbReference>
<dbReference type="GO" id="GO:0031625">
    <property type="term" value="F:ubiquitin protein ligase binding"/>
    <property type="evidence" value="ECO:0007669"/>
    <property type="project" value="Ensembl"/>
</dbReference>
<dbReference type="GO" id="GO:0007189">
    <property type="term" value="P:adenylate cyclase-activating G protein-coupled receptor signaling pathway"/>
    <property type="evidence" value="ECO:0000318"/>
    <property type="project" value="GO_Central"/>
</dbReference>
<dbReference type="GO" id="GO:0035556">
    <property type="term" value="P:intracellular signal transduction"/>
    <property type="evidence" value="ECO:0007669"/>
    <property type="project" value="Ensembl"/>
</dbReference>
<dbReference type="GO" id="GO:0042438">
    <property type="term" value="P:melanin biosynthetic process"/>
    <property type="evidence" value="ECO:0007669"/>
    <property type="project" value="Ensembl"/>
</dbReference>
<dbReference type="GO" id="GO:0032720">
    <property type="term" value="P:negative regulation of tumor necrosis factor production"/>
    <property type="evidence" value="ECO:0007669"/>
    <property type="project" value="Ensembl"/>
</dbReference>
<dbReference type="GO" id="GO:0007200">
    <property type="term" value="P:phospholipase C-activating G protein-coupled receptor signaling pathway"/>
    <property type="evidence" value="ECO:0007669"/>
    <property type="project" value="Ensembl"/>
</dbReference>
<dbReference type="GO" id="GO:0141163">
    <property type="term" value="P:positive regulation of cAMP/PKA signal transduction"/>
    <property type="evidence" value="ECO:0007669"/>
    <property type="project" value="Ensembl"/>
</dbReference>
<dbReference type="GO" id="GO:0045944">
    <property type="term" value="P:positive regulation of transcription by RNA polymerase II"/>
    <property type="evidence" value="ECO:0007669"/>
    <property type="project" value="Ensembl"/>
</dbReference>
<dbReference type="GO" id="GO:0019222">
    <property type="term" value="P:regulation of metabolic process"/>
    <property type="evidence" value="ECO:0000318"/>
    <property type="project" value="GO_Central"/>
</dbReference>
<dbReference type="GO" id="GO:0019233">
    <property type="term" value="P:sensory perception of pain"/>
    <property type="evidence" value="ECO:0007669"/>
    <property type="project" value="Ensembl"/>
</dbReference>
<dbReference type="GO" id="GO:0070914">
    <property type="term" value="P:UV-damage excision repair"/>
    <property type="evidence" value="ECO:0007669"/>
    <property type="project" value="Ensembl"/>
</dbReference>
<dbReference type="FunFam" id="1.20.1070.10:FF:000211">
    <property type="entry name" value="Melanocyte-stimulating hormone receptor"/>
    <property type="match status" value="1"/>
</dbReference>
<dbReference type="Gene3D" id="1.20.1070.10">
    <property type="entry name" value="Rhodopsin 7-helix transmembrane proteins"/>
    <property type="match status" value="1"/>
</dbReference>
<dbReference type="InterPro" id="IPR000276">
    <property type="entry name" value="GPCR_Rhodpsn"/>
</dbReference>
<dbReference type="InterPro" id="IPR017452">
    <property type="entry name" value="GPCR_Rhodpsn_7TM"/>
</dbReference>
<dbReference type="InterPro" id="IPR001671">
    <property type="entry name" value="Melcrt_ACTH_rcpt"/>
</dbReference>
<dbReference type="InterPro" id="IPR000761">
    <property type="entry name" value="MSH_rcpt"/>
</dbReference>
<dbReference type="PANTHER" id="PTHR22750">
    <property type="entry name" value="G-PROTEIN COUPLED RECEPTOR"/>
    <property type="match status" value="1"/>
</dbReference>
<dbReference type="Pfam" id="PF00001">
    <property type="entry name" value="7tm_1"/>
    <property type="match status" value="1"/>
</dbReference>
<dbReference type="PRINTS" id="PR00237">
    <property type="entry name" value="GPCRRHODOPSN"/>
</dbReference>
<dbReference type="PRINTS" id="PR00534">
    <property type="entry name" value="MCRFAMILY"/>
</dbReference>
<dbReference type="PRINTS" id="PR00536">
    <property type="entry name" value="MELNOCYTESHR"/>
</dbReference>
<dbReference type="SMART" id="SM01381">
    <property type="entry name" value="7TM_GPCR_Srsx"/>
    <property type="match status" value="1"/>
</dbReference>
<dbReference type="SUPFAM" id="SSF81321">
    <property type="entry name" value="Family A G protein-coupled receptor-like"/>
    <property type="match status" value="1"/>
</dbReference>
<dbReference type="PROSITE" id="PS00237">
    <property type="entry name" value="G_PROTEIN_RECEP_F1_1"/>
    <property type="match status" value="1"/>
</dbReference>
<dbReference type="PROSITE" id="PS50262">
    <property type="entry name" value="G_PROTEIN_RECEP_F1_2"/>
    <property type="match status" value="1"/>
</dbReference>
<organism>
    <name type="scientific">Equus caballus</name>
    <name type="common">Horse</name>
    <dbReference type="NCBI Taxonomy" id="9796"/>
    <lineage>
        <taxon>Eukaryota</taxon>
        <taxon>Metazoa</taxon>
        <taxon>Chordata</taxon>
        <taxon>Craniata</taxon>
        <taxon>Vertebrata</taxon>
        <taxon>Euteleostomi</taxon>
        <taxon>Mammalia</taxon>
        <taxon>Eutheria</taxon>
        <taxon>Laurasiatheria</taxon>
        <taxon>Perissodactyla</taxon>
        <taxon>Equidae</taxon>
        <taxon>Equus</taxon>
    </lineage>
</organism>
<name>MSHR_HORSE</name>
<protein>
    <recommendedName>
        <fullName>Melanocyte-stimulating hormone receptor</fullName>
        <shortName>MSH-R</shortName>
    </recommendedName>
    <alternativeName>
        <fullName>Melanocortin receptor 1</fullName>
        <shortName>MC1-R</shortName>
    </alternativeName>
</protein>
<evidence type="ECO:0000250" key="1">
    <source>
        <dbReference type="UniProtKB" id="Q01726"/>
    </source>
</evidence>
<evidence type="ECO:0000255" key="2"/>
<evidence type="ECO:0000255" key="3">
    <source>
        <dbReference type="PROSITE-ProRule" id="PRU00521"/>
    </source>
</evidence>
<evidence type="ECO:0000269" key="4">
    <source>
    </source>
</evidence>
<evidence type="ECO:0000269" key="5">
    <source>
    </source>
</evidence>
<proteinExistence type="inferred from homology"/>
<accession>P79166</accession>
<accession>Q95MP3</accession>
<keyword id="KW-1003">Cell membrane</keyword>
<keyword id="KW-0297">G-protein coupled receptor</keyword>
<keyword id="KW-0325">Glycoprotein</keyword>
<keyword id="KW-0449">Lipoprotein</keyword>
<keyword id="KW-0472">Membrane</keyword>
<keyword id="KW-0564">Palmitate</keyword>
<keyword id="KW-0675">Receptor</keyword>
<keyword id="KW-1185">Reference proteome</keyword>
<keyword id="KW-0807">Transducer</keyword>
<keyword id="KW-0812">Transmembrane</keyword>
<keyword id="KW-1133">Transmembrane helix</keyword>